<proteinExistence type="evidence at transcript level"/>
<name>MLO5_ARATH</name>
<dbReference type="EMBL" id="AF369566">
    <property type="protein sequence ID" value="AAK53798.1"/>
    <property type="molecule type" value="mRNA"/>
</dbReference>
<dbReference type="EMBL" id="AC002332">
    <property type="protein sequence ID" value="AAM14803.1"/>
    <property type="molecule type" value="Genomic_DNA"/>
</dbReference>
<dbReference type="EMBL" id="U78721">
    <property type="protein sequence ID" value="AAC69142.3"/>
    <property type="molecule type" value="Genomic_DNA"/>
</dbReference>
<dbReference type="EMBL" id="CP002685">
    <property type="protein sequence ID" value="AEC08867.1"/>
    <property type="molecule type" value="Genomic_DNA"/>
</dbReference>
<dbReference type="PIR" id="B84748">
    <property type="entry name" value="B84748"/>
</dbReference>
<dbReference type="RefSeq" id="NP_180923.1">
    <property type="nucleotide sequence ID" value="NM_128925.2"/>
</dbReference>
<dbReference type="BioGRID" id="3279">
    <property type="interactions" value="13"/>
</dbReference>
<dbReference type="IntAct" id="O22815">
    <property type="interactions" value="13"/>
</dbReference>
<dbReference type="STRING" id="3702.O22815"/>
<dbReference type="TCDB" id="1.A.130.1.12">
    <property type="family name" value="the mildew-resistance locus o (mlo) family"/>
</dbReference>
<dbReference type="iPTMnet" id="O22815"/>
<dbReference type="PaxDb" id="3702-AT2G33670.1"/>
<dbReference type="ProteomicsDB" id="238712"/>
<dbReference type="EnsemblPlants" id="AT2G33670.1">
    <property type="protein sequence ID" value="AT2G33670.1"/>
    <property type="gene ID" value="AT2G33670"/>
</dbReference>
<dbReference type="GeneID" id="817932"/>
<dbReference type="Gramene" id="AT2G33670.1">
    <property type="protein sequence ID" value="AT2G33670.1"/>
    <property type="gene ID" value="AT2G33670"/>
</dbReference>
<dbReference type="KEGG" id="ath:AT2G33670"/>
<dbReference type="Araport" id="AT2G33670"/>
<dbReference type="TAIR" id="AT2G33670">
    <property type="gene designation" value="MLO5"/>
</dbReference>
<dbReference type="eggNOG" id="ENOG502QPZ5">
    <property type="taxonomic scope" value="Eukaryota"/>
</dbReference>
<dbReference type="HOGENOM" id="CLU_024720_1_0_1"/>
<dbReference type="InParanoid" id="O22815"/>
<dbReference type="OMA" id="ELMIHKI"/>
<dbReference type="OrthoDB" id="1388414at2759"/>
<dbReference type="PhylomeDB" id="O22815"/>
<dbReference type="PRO" id="PR:O22815"/>
<dbReference type="Proteomes" id="UP000006548">
    <property type="component" value="Chromosome 2"/>
</dbReference>
<dbReference type="ExpressionAtlas" id="O22815">
    <property type="expression patterns" value="baseline and differential"/>
</dbReference>
<dbReference type="GO" id="GO:0005886">
    <property type="term" value="C:plasma membrane"/>
    <property type="evidence" value="ECO:0000314"/>
    <property type="project" value="TAIR"/>
</dbReference>
<dbReference type="GO" id="GO:0005516">
    <property type="term" value="F:calmodulin binding"/>
    <property type="evidence" value="ECO:0007669"/>
    <property type="project" value="UniProtKB-KW"/>
</dbReference>
<dbReference type="GO" id="GO:0006952">
    <property type="term" value="P:defense response"/>
    <property type="evidence" value="ECO:0007669"/>
    <property type="project" value="UniProtKB-KW"/>
</dbReference>
<dbReference type="GO" id="GO:0010183">
    <property type="term" value="P:pollen tube guidance"/>
    <property type="evidence" value="ECO:0000316"/>
    <property type="project" value="TAIR"/>
</dbReference>
<dbReference type="GO" id="GO:0072659">
    <property type="term" value="P:protein localization to plasma membrane"/>
    <property type="evidence" value="ECO:0000316"/>
    <property type="project" value="TAIR"/>
</dbReference>
<dbReference type="InterPro" id="IPR004326">
    <property type="entry name" value="Mlo"/>
</dbReference>
<dbReference type="PANTHER" id="PTHR31942">
    <property type="entry name" value="MLO-LIKE PROTEIN 1"/>
    <property type="match status" value="1"/>
</dbReference>
<dbReference type="PANTHER" id="PTHR31942:SF53">
    <property type="entry name" value="MLO-LIKE PROTEIN 5-RELATED"/>
    <property type="match status" value="1"/>
</dbReference>
<dbReference type="Pfam" id="PF03094">
    <property type="entry name" value="Mlo"/>
    <property type="match status" value="1"/>
</dbReference>
<protein>
    <recommendedName>
        <fullName>MLO-like protein 5</fullName>
        <shortName>AtMlo5</shortName>
    </recommendedName>
</protein>
<comment type="function">
    <text evidence="1">May be involved in modulation of pathogen defense and leaf cell death. Activity seems to be regulated by Ca(2+)-dependent calmodulin binding and seems not to require heterotrimeric G proteins (By similarity).</text>
</comment>
<comment type="subcellular location">
    <subcellularLocation>
        <location evidence="1">Membrane</location>
        <topology evidence="1">Multi-pass membrane protein</topology>
    </subcellularLocation>
</comment>
<comment type="domain">
    <text evidence="1">The C-terminus contains a calmodulin-binding domain, which binds calmodulin in a calcium-dependent fashion.</text>
</comment>
<comment type="similarity">
    <text evidence="4">Belongs to the MLO family.</text>
</comment>
<keyword id="KW-0112">Calmodulin-binding</keyword>
<keyword id="KW-0472">Membrane</keyword>
<keyword id="KW-0568">Pathogenesis-related protein</keyword>
<keyword id="KW-0611">Plant defense</keyword>
<keyword id="KW-1185">Reference proteome</keyword>
<keyword id="KW-0812">Transmembrane</keyword>
<keyword id="KW-1133">Transmembrane helix</keyword>
<organism>
    <name type="scientific">Arabidopsis thaliana</name>
    <name type="common">Mouse-ear cress</name>
    <dbReference type="NCBI Taxonomy" id="3702"/>
    <lineage>
        <taxon>Eukaryota</taxon>
        <taxon>Viridiplantae</taxon>
        <taxon>Streptophyta</taxon>
        <taxon>Embryophyta</taxon>
        <taxon>Tracheophyta</taxon>
        <taxon>Spermatophyta</taxon>
        <taxon>Magnoliopsida</taxon>
        <taxon>eudicotyledons</taxon>
        <taxon>Gunneridae</taxon>
        <taxon>Pentapetalae</taxon>
        <taxon>rosids</taxon>
        <taxon>malvids</taxon>
        <taxon>Brassicales</taxon>
        <taxon>Brassicaceae</taxon>
        <taxon>Camelineae</taxon>
        <taxon>Arabidopsis</taxon>
    </lineage>
</organism>
<evidence type="ECO:0000250" key="1"/>
<evidence type="ECO:0000255" key="2"/>
<evidence type="ECO:0000256" key="3">
    <source>
        <dbReference type="SAM" id="MobiDB-lite"/>
    </source>
</evidence>
<evidence type="ECO:0000305" key="4"/>
<reference key="1">
    <citation type="journal article" date="2003" name="J. Mol. Evol.">
        <title>Molecular phylogeny and evolution of the plant-specific seven-transmembrane MLO family.</title>
        <authorList>
            <person name="Devoto A."/>
            <person name="Hartmann H.A."/>
            <person name="Piffanelli P."/>
            <person name="Elliott C."/>
            <person name="Simmons C."/>
            <person name="Taramino G."/>
            <person name="Goh C.-S."/>
            <person name="Cohen F.E."/>
            <person name="Emerson B.C."/>
            <person name="Schulze-Lefert P."/>
            <person name="Panstruga R."/>
        </authorList>
    </citation>
    <scope>NUCLEOTIDE SEQUENCE [MRNA]</scope>
</reference>
<reference key="2">
    <citation type="journal article" date="1999" name="Nature">
        <title>Sequence and analysis of chromosome 2 of the plant Arabidopsis thaliana.</title>
        <authorList>
            <person name="Lin X."/>
            <person name="Kaul S."/>
            <person name="Rounsley S.D."/>
            <person name="Shea T.P."/>
            <person name="Benito M.-I."/>
            <person name="Town C.D."/>
            <person name="Fujii C.Y."/>
            <person name="Mason T.M."/>
            <person name="Bowman C.L."/>
            <person name="Barnstead M.E."/>
            <person name="Feldblyum T.V."/>
            <person name="Buell C.R."/>
            <person name="Ketchum K.A."/>
            <person name="Lee J.J."/>
            <person name="Ronning C.M."/>
            <person name="Koo H.L."/>
            <person name="Moffat K.S."/>
            <person name="Cronin L.A."/>
            <person name="Shen M."/>
            <person name="Pai G."/>
            <person name="Van Aken S."/>
            <person name="Umayam L."/>
            <person name="Tallon L.J."/>
            <person name="Gill J.E."/>
            <person name="Adams M.D."/>
            <person name="Carrera A.J."/>
            <person name="Creasy T.H."/>
            <person name="Goodman H.M."/>
            <person name="Somerville C.R."/>
            <person name="Copenhaver G.P."/>
            <person name="Preuss D."/>
            <person name="Nierman W.C."/>
            <person name="White O."/>
            <person name="Eisen J.A."/>
            <person name="Salzberg S.L."/>
            <person name="Fraser C.M."/>
            <person name="Venter J.C."/>
        </authorList>
    </citation>
    <scope>NUCLEOTIDE SEQUENCE [LARGE SCALE GENOMIC DNA]</scope>
    <source>
        <strain>cv. Columbia</strain>
    </source>
</reference>
<reference key="3">
    <citation type="journal article" date="2017" name="Plant J.">
        <title>Araport11: a complete reannotation of the Arabidopsis thaliana reference genome.</title>
        <authorList>
            <person name="Cheng C.Y."/>
            <person name="Krishnakumar V."/>
            <person name="Chan A.P."/>
            <person name="Thibaud-Nissen F."/>
            <person name="Schobel S."/>
            <person name="Town C.D."/>
        </authorList>
    </citation>
    <scope>GENOME REANNOTATION</scope>
    <source>
        <strain>cv. Columbia</strain>
    </source>
</reference>
<sequence length="501" mass="56896">MAGGGGGSTSGEGPRELDQTPTWAVSTVCGVIILISIVLELMIHKIGEVFTERRKKALYEALQKIKNELMVLGFISLLLTFGQNYIASLCVASRYGHAMSFCGPYDGPSGESKKPKTTEHLERRVLADAAPAQCKKGYVPLISLNALHQVHIFIFFLAVFHVIYSAITMMLGRAKIRGWKVWEEEVINDHEMMNDPSRFRLTHETSFVREHVNPWAKNRFSFYVMCFFRQMLRSVRKSDYLTMRHGFISVHLAPGMKFNFQKYIKRSLEDDFKVVVGISPELWAFVMLFLLFDVHGWYVTAVITMIPPLLTLAIGTKLQAIISDMALEIQERHAVIQGMPLVNVSDRHFWFSRPALVLHIIHFILFQNAFEITYFFWIWYEFGLRSCFHHHFALIIIRVALGVGVQFLCSYITLPLYALVTQMGSTMKRSVFDDQTSKALKNWHKNAKKKSETPGQTQPPLPNLRPKTGGDIESASPANITASVDVKESDQSQSRDLLSGP</sequence>
<accession>O22815</accession>
<feature type="chain" id="PRO_0000209935" description="MLO-like protein 5">
    <location>
        <begin position="1"/>
        <end position="501"/>
    </location>
</feature>
<feature type="topological domain" description="Extracellular" evidence="2">
    <location>
        <begin position="1"/>
        <end position="22"/>
    </location>
</feature>
<feature type="transmembrane region" description="Helical; Name=1" evidence="2">
    <location>
        <begin position="23"/>
        <end position="43"/>
    </location>
</feature>
<feature type="topological domain" description="Cytoplasmic" evidence="2">
    <location>
        <begin position="44"/>
        <end position="68"/>
    </location>
</feature>
<feature type="transmembrane region" description="Helical; Name=2" evidence="2">
    <location>
        <begin position="69"/>
        <end position="89"/>
    </location>
</feature>
<feature type="topological domain" description="Extracellular" evidence="2">
    <location>
        <begin position="90"/>
        <end position="151"/>
    </location>
</feature>
<feature type="transmembrane region" description="Helical; Name=3" evidence="2">
    <location>
        <begin position="152"/>
        <end position="172"/>
    </location>
</feature>
<feature type="topological domain" description="Cytoplasmic" evidence="2">
    <location>
        <begin position="173"/>
        <end position="273"/>
    </location>
</feature>
<feature type="transmembrane region" description="Helical; Name=4" evidence="2">
    <location>
        <begin position="274"/>
        <end position="294"/>
    </location>
</feature>
<feature type="topological domain" description="Extracellular" evidence="2">
    <location>
        <position position="295"/>
    </location>
</feature>
<feature type="transmembrane region" description="Helical; Name=5" evidence="2">
    <location>
        <begin position="296"/>
        <end position="316"/>
    </location>
</feature>
<feature type="topological domain" description="Cytoplasmic" evidence="2">
    <location>
        <begin position="317"/>
        <end position="359"/>
    </location>
</feature>
<feature type="transmembrane region" description="Helical; Name=6" evidence="2">
    <location>
        <begin position="360"/>
        <end position="380"/>
    </location>
</feature>
<feature type="topological domain" description="Extracellular" evidence="2">
    <location>
        <begin position="381"/>
        <end position="391"/>
    </location>
</feature>
<feature type="transmembrane region" description="Helical; Name=7" evidence="2">
    <location>
        <begin position="392"/>
        <end position="412"/>
    </location>
</feature>
<feature type="topological domain" description="Cytoplasmic" evidence="2">
    <location>
        <begin position="413"/>
        <end position="501"/>
    </location>
</feature>
<feature type="region of interest" description="Disordered" evidence="3">
    <location>
        <begin position="443"/>
        <end position="501"/>
    </location>
</feature>
<feature type="region of interest" description="Calmodulin-binding">
    <location>
        <begin position="450"/>
        <end position="471"/>
    </location>
</feature>
<feature type="compositionally biased region" description="Polar residues" evidence="3">
    <location>
        <begin position="491"/>
        <end position="501"/>
    </location>
</feature>
<feature type="sequence conflict" description="In Ref. 1; AAK53798." evidence="4" ref="1">
    <location>
        <position position="458"/>
    </location>
</feature>
<gene>
    <name type="primary">MLO5</name>
    <name type="ordered locus">At2g33670</name>
    <name type="ORF">F4P9.44</name>
    <name type="ORF">T1B8.26</name>
</gene>